<feature type="chain" id="PRO_0000197510" description="Integrase">
    <location>
        <begin position="1"/>
        <end position="337"/>
    </location>
</feature>
<feature type="domain" description="Core-binding (CB)" evidence="3">
    <location>
        <begin position="60"/>
        <end position="147"/>
    </location>
</feature>
<feature type="domain" description="Tyr recombinase" evidence="2">
    <location>
        <begin position="169"/>
        <end position="328"/>
    </location>
</feature>
<feature type="active site" evidence="2">
    <location>
        <position position="207"/>
    </location>
</feature>
<feature type="active site" evidence="2">
    <location>
        <position position="230"/>
    </location>
</feature>
<feature type="active site" evidence="2">
    <location>
        <position position="280"/>
    </location>
</feature>
<feature type="active site" evidence="2">
    <location>
        <position position="283"/>
    </location>
</feature>
<feature type="active site" evidence="2">
    <location>
        <position position="306"/>
    </location>
</feature>
<feature type="active site" description="O-(3'-phospho-DNA)-tyrosine intermediate" evidence="2">
    <location>
        <position position="315"/>
    </location>
</feature>
<feature type="helix" evidence="5">
    <location>
        <begin position="176"/>
        <end position="186"/>
    </location>
</feature>
<feature type="strand" evidence="5">
    <location>
        <begin position="189"/>
        <end position="191"/>
    </location>
</feature>
<feature type="helix" evidence="5">
    <location>
        <begin position="194"/>
        <end position="204"/>
    </location>
</feature>
<feature type="helix" evidence="5">
    <location>
        <begin position="208"/>
        <end position="212"/>
    </location>
</feature>
<feature type="turn" evidence="5">
    <location>
        <begin position="216"/>
        <end position="218"/>
    </location>
</feature>
<feature type="strand" evidence="5">
    <location>
        <begin position="223"/>
        <end position="232"/>
    </location>
</feature>
<feature type="strand" evidence="5">
    <location>
        <begin position="234"/>
        <end position="238"/>
    </location>
</feature>
<feature type="helix" evidence="5">
    <location>
        <begin position="241"/>
        <end position="246"/>
    </location>
</feature>
<feature type="strand" evidence="5">
    <location>
        <begin position="251"/>
        <end position="255"/>
    </location>
</feature>
<feature type="helix" evidence="5">
    <location>
        <begin position="259"/>
        <end position="268"/>
    </location>
</feature>
<feature type="turn" evidence="5">
    <location>
        <begin position="278"/>
        <end position="280"/>
    </location>
</feature>
<feature type="helix" evidence="5">
    <location>
        <begin position="281"/>
        <end position="292"/>
    </location>
</feature>
<feature type="helix" evidence="5">
    <location>
        <begin position="297"/>
        <end position="304"/>
    </location>
</feature>
<feature type="helix" evidence="5">
    <location>
        <begin position="309"/>
        <end position="312"/>
    </location>
</feature>
<feature type="helix" evidence="5">
    <location>
        <begin position="313"/>
        <end position="318"/>
    </location>
</feature>
<feature type="helix" evidence="5">
    <location>
        <begin position="325"/>
        <end position="329"/>
    </location>
</feature>
<feature type="turn" evidence="5">
    <location>
        <begin position="331"/>
        <end position="333"/>
    </location>
</feature>
<dbReference type="EC" id="2.7.7.-" evidence="1"/>
<dbReference type="EC" id="3.1.-.-" evidence="1"/>
<dbReference type="EMBL" id="U24159">
    <property type="protein sequence ID" value="AAB09182.1"/>
    <property type="molecule type" value="Genomic_DNA"/>
</dbReference>
<dbReference type="PIR" id="A33857">
    <property type="entry name" value="RSBPHP"/>
</dbReference>
<dbReference type="RefSeq" id="NP_043466.1">
    <property type="nucleotide sequence ID" value="NC_001697.1"/>
</dbReference>
<dbReference type="PDB" id="1AIH">
    <property type="method" value="X-ray"/>
    <property type="resolution" value="2.50 A"/>
    <property type="chains" value="A/B/C/D=168-337"/>
</dbReference>
<dbReference type="PDBsum" id="1AIH"/>
<dbReference type="SMR" id="P21442"/>
<dbReference type="GeneID" id="1261146"/>
<dbReference type="KEGG" id="vg:1261146"/>
<dbReference type="EvolutionaryTrace" id="P21442"/>
<dbReference type="Proteomes" id="UP000001713">
    <property type="component" value="Segment"/>
</dbReference>
<dbReference type="GO" id="GO:0003677">
    <property type="term" value="F:DNA binding"/>
    <property type="evidence" value="ECO:0007669"/>
    <property type="project" value="UniProtKB-KW"/>
</dbReference>
<dbReference type="GO" id="GO:0016787">
    <property type="term" value="F:hydrolase activity"/>
    <property type="evidence" value="ECO:0007669"/>
    <property type="project" value="UniProtKB-KW"/>
</dbReference>
<dbReference type="GO" id="GO:0016740">
    <property type="term" value="F:transferase activity"/>
    <property type="evidence" value="ECO:0007669"/>
    <property type="project" value="UniProtKB-KW"/>
</dbReference>
<dbReference type="GO" id="GO:0015074">
    <property type="term" value="P:DNA integration"/>
    <property type="evidence" value="ECO:0007669"/>
    <property type="project" value="UniProtKB-KW"/>
</dbReference>
<dbReference type="GO" id="GO:0006310">
    <property type="term" value="P:DNA recombination"/>
    <property type="evidence" value="ECO:0007669"/>
    <property type="project" value="UniProtKB-KW"/>
</dbReference>
<dbReference type="GO" id="GO:0075713">
    <property type="term" value="P:establishment of integrated proviral latency"/>
    <property type="evidence" value="ECO:0007669"/>
    <property type="project" value="UniProtKB-KW"/>
</dbReference>
<dbReference type="GO" id="GO:0046718">
    <property type="term" value="P:symbiont entry into host cell"/>
    <property type="evidence" value="ECO:0007669"/>
    <property type="project" value="UniProtKB-KW"/>
</dbReference>
<dbReference type="GO" id="GO:0044826">
    <property type="term" value="P:viral genome integration into host DNA"/>
    <property type="evidence" value="ECO:0007669"/>
    <property type="project" value="UniProtKB-KW"/>
</dbReference>
<dbReference type="CDD" id="cd00796">
    <property type="entry name" value="INT_Rci_Hp1_C"/>
    <property type="match status" value="1"/>
</dbReference>
<dbReference type="Gene3D" id="1.10.150.130">
    <property type="match status" value="1"/>
</dbReference>
<dbReference type="Gene3D" id="1.10.443.10">
    <property type="entry name" value="Intergrase catalytic core"/>
    <property type="match status" value="1"/>
</dbReference>
<dbReference type="InterPro" id="IPR044068">
    <property type="entry name" value="CB"/>
</dbReference>
<dbReference type="InterPro" id="IPR011010">
    <property type="entry name" value="DNA_brk_join_enz"/>
</dbReference>
<dbReference type="InterPro" id="IPR013762">
    <property type="entry name" value="Integrase-like_cat_sf"/>
</dbReference>
<dbReference type="InterPro" id="IPR002104">
    <property type="entry name" value="Integrase_catalytic"/>
</dbReference>
<dbReference type="InterPro" id="IPR010998">
    <property type="entry name" value="Integrase_recombinase_N"/>
</dbReference>
<dbReference type="InterPro" id="IPR050090">
    <property type="entry name" value="Tyrosine_recombinase_XerCD"/>
</dbReference>
<dbReference type="PANTHER" id="PTHR30349:SF93">
    <property type="entry name" value="FELS-2 PROPHAGE PROTEIN"/>
    <property type="match status" value="1"/>
</dbReference>
<dbReference type="PANTHER" id="PTHR30349">
    <property type="entry name" value="PHAGE INTEGRASE-RELATED"/>
    <property type="match status" value="1"/>
</dbReference>
<dbReference type="Pfam" id="PF24624">
    <property type="entry name" value="Int_N"/>
    <property type="match status" value="1"/>
</dbReference>
<dbReference type="Pfam" id="PF00589">
    <property type="entry name" value="Phage_integrase"/>
    <property type="match status" value="1"/>
</dbReference>
<dbReference type="SUPFAM" id="SSF56349">
    <property type="entry name" value="DNA breaking-rejoining enzymes"/>
    <property type="match status" value="1"/>
</dbReference>
<dbReference type="PROSITE" id="PS51900">
    <property type="entry name" value="CB"/>
    <property type="match status" value="1"/>
</dbReference>
<dbReference type="PROSITE" id="PS51898">
    <property type="entry name" value="TYR_RECOMBINASE"/>
    <property type="match status" value="1"/>
</dbReference>
<keyword id="KW-0002">3D-structure</keyword>
<keyword id="KW-0229">DNA integration</keyword>
<keyword id="KW-0233">DNA recombination</keyword>
<keyword id="KW-0238">DNA-binding</keyword>
<keyword id="KW-0378">Hydrolase</keyword>
<keyword id="KW-1185">Reference proteome</keyword>
<keyword id="KW-0808">Transferase</keyword>
<keyword id="KW-1179">Viral genome integration</keyword>
<keyword id="KW-1160">Virus entry into host cell</keyword>
<name>VINT_BPHC1</name>
<gene>
    <name type="primary">int</name>
</gene>
<proteinExistence type="evidence at protein level"/>
<comment type="function">
    <text>Integrase is necessary for integration of the phage into the host genome by site-specific recombination. In conjunction with excisionase, integrase is also necessary for excision of the prophage from the host genome.</text>
</comment>
<comment type="subunit">
    <text>Homodimer.</text>
</comment>
<comment type="similarity">
    <text evidence="4">Belongs to the 'phage' integrase family.</text>
</comment>
<sequence>MAVRKDTKNGKWLAEVYVNGNASRKWFLTKGDALRFYNQAKEQTTSAVDSVQVLESSDLPALSFYVQEWFDLHGKTLSDGKARLAKLKNLCSNLGDPPANEFNAKIFADYRKRRLDGEFSVNKNNPPKEATVNREHAYLRAVFNELKSLRKWTTENPLDGVRLFKERETELAFLYERDIYRLLAECDNSRNPDLGLIVRICLATGARWSEAETLTQSQVMPYKITFTNTKSKKNRTVPISKELFDMLPKKRGRLFNDAYESFENAVLRAEIELPKGQLTHVLRHTFASHFMMNGGNILVLKEILGHSTIEMTMRYAHFAPSHLESAVKFNPLSNPAQ</sequence>
<evidence type="ECO:0000250" key="1">
    <source>
        <dbReference type="UniProtKB" id="P36932"/>
    </source>
</evidence>
<evidence type="ECO:0000255" key="2">
    <source>
        <dbReference type="PROSITE-ProRule" id="PRU01246"/>
    </source>
</evidence>
<evidence type="ECO:0000255" key="3">
    <source>
        <dbReference type="PROSITE-ProRule" id="PRU01248"/>
    </source>
</evidence>
<evidence type="ECO:0000305" key="4"/>
<evidence type="ECO:0007829" key="5">
    <source>
        <dbReference type="PDB" id="1AIH"/>
    </source>
</evidence>
<protein>
    <recommendedName>
        <fullName>Integrase</fullName>
        <ecNumber evidence="1">2.7.7.-</ecNumber>
        <ecNumber evidence="1">3.1.-.-</ecNumber>
    </recommendedName>
</protein>
<accession>P21442</accession>
<organism>
    <name type="scientific">Haemophilus phage HP1 (strain HP1c1)</name>
    <name type="common">Bacteriophage HP1</name>
    <dbReference type="NCBI Taxonomy" id="1289570"/>
    <lineage>
        <taxon>Viruses</taxon>
        <taxon>Duplodnaviria</taxon>
        <taxon>Heunggongvirae</taxon>
        <taxon>Uroviricota</taxon>
        <taxon>Caudoviricetes</taxon>
        <taxon>Peduoviridae</taxon>
        <taxon>Hpunavirus</taxon>
        <taxon>Haemophilus phage HP1</taxon>
    </lineage>
</organism>
<reference key="1">
    <citation type="journal article" date="1989" name="J. Bacteriol.">
        <title>Nucleotide sequence and expression of the gene for the site-specific integration protein from bacteriophage HP1 of Haemophilus influenzae.</title>
        <authorList>
            <person name="Goodman S.D."/>
            <person name="Scocca J.J."/>
        </authorList>
    </citation>
    <scope>NUCLEOTIDE SEQUENCE [GENOMIC DNA]</scope>
</reference>
<reference key="2">
    <citation type="journal article" date="1994" name="Mol. Microbiol.">
        <title>Identification of an HP1 phage protein required for site-specific excision.</title>
        <authorList>
            <person name="Esposito D."/>
            <person name="Scocca J.J."/>
        </authorList>
    </citation>
    <scope>NUCLEOTIDE SEQUENCE [GENOMIC DNA]</scope>
</reference>
<reference key="3">
    <citation type="journal article" date="1996" name="Nucleic Acids Res.">
        <title>The complete nucleotide sequence of bacteriophage HP1 DNA.</title>
        <authorList>
            <person name="Esposito D."/>
            <person name="Fitzmaurice W.P."/>
            <person name="Benjamin R.C."/>
            <person name="Goodman S.D."/>
            <person name="Waldman A.S."/>
            <person name="Scocca J.J."/>
        </authorList>
    </citation>
    <scope>NUCLEOTIDE SEQUENCE [LARGE SCALE GENOMIC DNA]</scope>
</reference>
<reference key="4">
    <citation type="journal article" date="1997" name="Cell">
        <title>Molecular organization in site-specific recombination: the catalytic domain of bacteriophage HP1 integrase at 2.7-A resolution.</title>
        <authorList>
            <person name="Hickman A.B."/>
            <person name="Waninger S."/>
            <person name="Scocca J.J."/>
            <person name="Dyda F."/>
        </authorList>
    </citation>
    <scope>X-RAY CRYSTALLOGRAPHY (2.5 ANGSTROMS)</scope>
</reference>
<organismHost>
    <name type="scientific">Haemophilus influenzae</name>
    <dbReference type="NCBI Taxonomy" id="727"/>
</organismHost>